<keyword id="KW-0030">Aminoacyl-tRNA synthetase</keyword>
<keyword id="KW-0067">ATP-binding</keyword>
<keyword id="KW-0963">Cytoplasm</keyword>
<keyword id="KW-0436">Ligase</keyword>
<keyword id="KW-0460">Magnesium</keyword>
<keyword id="KW-0479">Metal-binding</keyword>
<keyword id="KW-0547">Nucleotide-binding</keyword>
<keyword id="KW-0648">Protein biosynthesis</keyword>
<accession>Q633N4</accession>
<evidence type="ECO:0000255" key="1">
    <source>
        <dbReference type="HAMAP-Rule" id="MF_00281"/>
    </source>
</evidence>
<feature type="chain" id="PRO_0000126661" description="Phenylalanine--tRNA ligase alpha subunit">
    <location>
        <begin position="1"/>
        <end position="344"/>
    </location>
</feature>
<feature type="binding site" evidence="1">
    <location>
        <position position="256"/>
    </location>
    <ligand>
        <name>Mg(2+)</name>
        <dbReference type="ChEBI" id="CHEBI:18420"/>
        <note>shared with beta subunit</note>
    </ligand>
</feature>
<protein>
    <recommendedName>
        <fullName evidence="1">Phenylalanine--tRNA ligase alpha subunit</fullName>
        <ecNumber evidence="1">6.1.1.20</ecNumber>
    </recommendedName>
    <alternativeName>
        <fullName evidence="1">Phenylalanyl-tRNA synthetase alpha subunit</fullName>
        <shortName evidence="1">PheRS</shortName>
    </alternativeName>
</protein>
<proteinExistence type="inferred from homology"/>
<sequence length="344" mass="38976">MEARLKELKQKALELIEEAKELKGLNDVRVAYLGKKGPITEVLRGMGKLSAEERPRMGALVNEVREAIQTRLDDKISNLEKAVIEAKLATETIDVTLPGRPVETGCHHPLTAVVEQIEDVFIGMGYEVAEGTEVEKDYYNFEALNLPKDHPARDMQDTFYITEETLLRTHTSSVQARTMENNKEKGPIKIICPGKVYRRDDDDATHSHQFMQIEGLVIDKNIRMSDLKGTLQVFVKKMFGEDREIRLRPSFFPFTEPSVEMDISCMMCHGKGCGTCKGTGWIEILGAGMVHPNVLEMAGYDSKEYQGFAFGMGAERIAMLKYGVDDIRHFYTNDVRFLQQFKRA</sequence>
<name>SYFA_BACCZ</name>
<gene>
    <name evidence="1" type="primary">pheS</name>
    <name type="ordered locus">BCE33L4304</name>
</gene>
<dbReference type="EC" id="6.1.1.20" evidence="1"/>
<dbReference type="EMBL" id="CP000001">
    <property type="protein sequence ID" value="AAU15965.1"/>
    <property type="molecule type" value="Genomic_DNA"/>
</dbReference>
<dbReference type="RefSeq" id="WP_000388219.1">
    <property type="nucleotide sequence ID" value="NZ_CP009968.1"/>
</dbReference>
<dbReference type="SMR" id="Q633N4"/>
<dbReference type="GeneID" id="83638271"/>
<dbReference type="KEGG" id="bcz:BCE33L4304"/>
<dbReference type="PATRIC" id="fig|288681.22.peg.1070"/>
<dbReference type="Proteomes" id="UP000002612">
    <property type="component" value="Chromosome"/>
</dbReference>
<dbReference type="GO" id="GO:0005737">
    <property type="term" value="C:cytoplasm"/>
    <property type="evidence" value="ECO:0007669"/>
    <property type="project" value="UniProtKB-SubCell"/>
</dbReference>
<dbReference type="GO" id="GO:0005524">
    <property type="term" value="F:ATP binding"/>
    <property type="evidence" value="ECO:0007669"/>
    <property type="project" value="UniProtKB-UniRule"/>
</dbReference>
<dbReference type="GO" id="GO:0140096">
    <property type="term" value="F:catalytic activity, acting on a protein"/>
    <property type="evidence" value="ECO:0007669"/>
    <property type="project" value="UniProtKB-ARBA"/>
</dbReference>
<dbReference type="GO" id="GO:0000287">
    <property type="term" value="F:magnesium ion binding"/>
    <property type="evidence" value="ECO:0007669"/>
    <property type="project" value="UniProtKB-UniRule"/>
</dbReference>
<dbReference type="GO" id="GO:0004826">
    <property type="term" value="F:phenylalanine-tRNA ligase activity"/>
    <property type="evidence" value="ECO:0007669"/>
    <property type="project" value="UniProtKB-UniRule"/>
</dbReference>
<dbReference type="GO" id="GO:0016740">
    <property type="term" value="F:transferase activity"/>
    <property type="evidence" value="ECO:0007669"/>
    <property type="project" value="UniProtKB-ARBA"/>
</dbReference>
<dbReference type="GO" id="GO:0000049">
    <property type="term" value="F:tRNA binding"/>
    <property type="evidence" value="ECO:0007669"/>
    <property type="project" value="InterPro"/>
</dbReference>
<dbReference type="GO" id="GO:0006432">
    <property type="term" value="P:phenylalanyl-tRNA aminoacylation"/>
    <property type="evidence" value="ECO:0007669"/>
    <property type="project" value="UniProtKB-UniRule"/>
</dbReference>
<dbReference type="CDD" id="cd00496">
    <property type="entry name" value="PheRS_alpha_core"/>
    <property type="match status" value="1"/>
</dbReference>
<dbReference type="FunFam" id="3.30.930.10:FF:000003">
    <property type="entry name" value="Phenylalanine--tRNA ligase alpha subunit"/>
    <property type="match status" value="1"/>
</dbReference>
<dbReference type="Gene3D" id="3.30.930.10">
    <property type="entry name" value="Bira Bifunctional Protein, Domain 2"/>
    <property type="match status" value="1"/>
</dbReference>
<dbReference type="HAMAP" id="MF_00281">
    <property type="entry name" value="Phe_tRNA_synth_alpha1"/>
    <property type="match status" value="1"/>
</dbReference>
<dbReference type="InterPro" id="IPR006195">
    <property type="entry name" value="aa-tRNA-synth_II"/>
</dbReference>
<dbReference type="InterPro" id="IPR045864">
    <property type="entry name" value="aa-tRNA-synth_II/BPL/LPL"/>
</dbReference>
<dbReference type="InterPro" id="IPR004529">
    <property type="entry name" value="Phe-tRNA-synth_IIc_asu"/>
</dbReference>
<dbReference type="InterPro" id="IPR004188">
    <property type="entry name" value="Phe-tRNA_ligase_II_N"/>
</dbReference>
<dbReference type="InterPro" id="IPR022911">
    <property type="entry name" value="Phe_tRNA_ligase_alpha1_bac"/>
</dbReference>
<dbReference type="InterPro" id="IPR002319">
    <property type="entry name" value="Phenylalanyl-tRNA_Synthase"/>
</dbReference>
<dbReference type="InterPro" id="IPR010978">
    <property type="entry name" value="tRNA-bd_arm"/>
</dbReference>
<dbReference type="NCBIfam" id="TIGR00468">
    <property type="entry name" value="pheS"/>
    <property type="match status" value="1"/>
</dbReference>
<dbReference type="PANTHER" id="PTHR11538:SF41">
    <property type="entry name" value="PHENYLALANINE--TRNA LIGASE, MITOCHONDRIAL"/>
    <property type="match status" value="1"/>
</dbReference>
<dbReference type="PANTHER" id="PTHR11538">
    <property type="entry name" value="PHENYLALANYL-TRNA SYNTHETASE"/>
    <property type="match status" value="1"/>
</dbReference>
<dbReference type="Pfam" id="PF02912">
    <property type="entry name" value="Phe_tRNA-synt_N"/>
    <property type="match status" value="1"/>
</dbReference>
<dbReference type="Pfam" id="PF01409">
    <property type="entry name" value="tRNA-synt_2d"/>
    <property type="match status" value="1"/>
</dbReference>
<dbReference type="SUPFAM" id="SSF55681">
    <property type="entry name" value="Class II aaRS and biotin synthetases"/>
    <property type="match status" value="1"/>
</dbReference>
<dbReference type="SUPFAM" id="SSF46589">
    <property type="entry name" value="tRNA-binding arm"/>
    <property type="match status" value="1"/>
</dbReference>
<dbReference type="PROSITE" id="PS50862">
    <property type="entry name" value="AA_TRNA_LIGASE_II"/>
    <property type="match status" value="1"/>
</dbReference>
<comment type="catalytic activity">
    <reaction evidence="1">
        <text>tRNA(Phe) + L-phenylalanine + ATP = L-phenylalanyl-tRNA(Phe) + AMP + diphosphate + H(+)</text>
        <dbReference type="Rhea" id="RHEA:19413"/>
        <dbReference type="Rhea" id="RHEA-COMP:9668"/>
        <dbReference type="Rhea" id="RHEA-COMP:9699"/>
        <dbReference type="ChEBI" id="CHEBI:15378"/>
        <dbReference type="ChEBI" id="CHEBI:30616"/>
        <dbReference type="ChEBI" id="CHEBI:33019"/>
        <dbReference type="ChEBI" id="CHEBI:58095"/>
        <dbReference type="ChEBI" id="CHEBI:78442"/>
        <dbReference type="ChEBI" id="CHEBI:78531"/>
        <dbReference type="ChEBI" id="CHEBI:456215"/>
        <dbReference type="EC" id="6.1.1.20"/>
    </reaction>
</comment>
<comment type="cofactor">
    <cofactor evidence="1">
        <name>Mg(2+)</name>
        <dbReference type="ChEBI" id="CHEBI:18420"/>
    </cofactor>
    <text evidence="1">Binds 2 magnesium ions per tetramer.</text>
</comment>
<comment type="subunit">
    <text evidence="1">Tetramer of two alpha and two beta subunits.</text>
</comment>
<comment type="subcellular location">
    <subcellularLocation>
        <location evidence="1">Cytoplasm</location>
    </subcellularLocation>
</comment>
<comment type="similarity">
    <text evidence="1">Belongs to the class-II aminoacyl-tRNA synthetase family. Phe-tRNA synthetase alpha subunit type 1 subfamily.</text>
</comment>
<reference key="1">
    <citation type="journal article" date="2006" name="J. Bacteriol.">
        <title>Pathogenomic sequence analysis of Bacillus cereus and Bacillus thuringiensis isolates closely related to Bacillus anthracis.</title>
        <authorList>
            <person name="Han C.S."/>
            <person name="Xie G."/>
            <person name="Challacombe J.F."/>
            <person name="Altherr M.R."/>
            <person name="Bhotika S.S."/>
            <person name="Bruce D."/>
            <person name="Campbell C.S."/>
            <person name="Campbell M.L."/>
            <person name="Chen J."/>
            <person name="Chertkov O."/>
            <person name="Cleland C."/>
            <person name="Dimitrijevic M."/>
            <person name="Doggett N.A."/>
            <person name="Fawcett J.J."/>
            <person name="Glavina T."/>
            <person name="Goodwin L.A."/>
            <person name="Hill K.K."/>
            <person name="Hitchcock P."/>
            <person name="Jackson P.J."/>
            <person name="Keim P."/>
            <person name="Kewalramani A.R."/>
            <person name="Longmire J."/>
            <person name="Lucas S."/>
            <person name="Malfatti S."/>
            <person name="McMurry K."/>
            <person name="Meincke L.J."/>
            <person name="Misra M."/>
            <person name="Moseman B.L."/>
            <person name="Mundt M."/>
            <person name="Munk A.C."/>
            <person name="Okinaka R.T."/>
            <person name="Parson-Quintana B."/>
            <person name="Reilly L.P."/>
            <person name="Richardson P."/>
            <person name="Robinson D.L."/>
            <person name="Rubin E."/>
            <person name="Saunders E."/>
            <person name="Tapia R."/>
            <person name="Tesmer J.G."/>
            <person name="Thayer N."/>
            <person name="Thompson L.S."/>
            <person name="Tice H."/>
            <person name="Ticknor L.O."/>
            <person name="Wills P.L."/>
            <person name="Brettin T.S."/>
            <person name="Gilna P."/>
        </authorList>
    </citation>
    <scope>NUCLEOTIDE SEQUENCE [LARGE SCALE GENOMIC DNA]</scope>
    <source>
        <strain>ZK / E33L</strain>
    </source>
</reference>
<organism>
    <name type="scientific">Bacillus cereus (strain ZK / E33L)</name>
    <dbReference type="NCBI Taxonomy" id="288681"/>
    <lineage>
        <taxon>Bacteria</taxon>
        <taxon>Bacillati</taxon>
        <taxon>Bacillota</taxon>
        <taxon>Bacilli</taxon>
        <taxon>Bacillales</taxon>
        <taxon>Bacillaceae</taxon>
        <taxon>Bacillus</taxon>
        <taxon>Bacillus cereus group</taxon>
    </lineage>
</organism>